<organism>
    <name type="scientific">Lachnoclostridium phytofermentans (strain ATCC 700394 / DSM 18823 / ISDg)</name>
    <name type="common">Clostridium phytofermentans</name>
    <dbReference type="NCBI Taxonomy" id="357809"/>
    <lineage>
        <taxon>Bacteria</taxon>
        <taxon>Bacillati</taxon>
        <taxon>Bacillota</taxon>
        <taxon>Clostridia</taxon>
        <taxon>Lachnospirales</taxon>
        <taxon>Lachnospiraceae</taxon>
    </lineage>
</organism>
<comment type="function">
    <text evidence="1">Could be involved in insertion of integral membrane proteins into the membrane.</text>
</comment>
<comment type="subcellular location">
    <subcellularLocation>
        <location evidence="1">Cell membrane</location>
        <topology evidence="1">Peripheral membrane protein</topology>
        <orientation evidence="1">Cytoplasmic side</orientation>
    </subcellularLocation>
</comment>
<comment type="similarity">
    <text evidence="1">Belongs to the UPF0161 family.</text>
</comment>
<evidence type="ECO:0000255" key="1">
    <source>
        <dbReference type="HAMAP-Rule" id="MF_00386"/>
    </source>
</evidence>
<name>YIDD_LACP7</name>
<gene>
    <name type="ordered locus">Cphy_3944</name>
</gene>
<keyword id="KW-1003">Cell membrane</keyword>
<keyword id="KW-0472">Membrane</keyword>
<keyword id="KW-1185">Reference proteome</keyword>
<proteinExistence type="inferred from homology"/>
<sequence length="70" mass="8127">MKRILIAIVKLYRKYISPMKRVPTCRFTPTCSEYALEALQRYGAIRGSYLAVRRILKCHPFHKGGFDPVP</sequence>
<reference key="1">
    <citation type="submission" date="2007-11" db="EMBL/GenBank/DDBJ databases">
        <title>Complete genome sequence of Clostridium phytofermentans ISDg.</title>
        <authorList>
            <person name="Leschine S.B."/>
            <person name="Warnick T.A."/>
            <person name="Blanchard J.L."/>
            <person name="Schnell D.J."/>
            <person name="Petit E.L."/>
            <person name="LaTouf W.G."/>
            <person name="Copeland A."/>
            <person name="Lucas S."/>
            <person name="Lapidus A."/>
            <person name="Barry K."/>
            <person name="Glavina del Rio T."/>
            <person name="Dalin E."/>
            <person name="Tice H."/>
            <person name="Pitluck S."/>
            <person name="Kiss H."/>
            <person name="Brettin T."/>
            <person name="Bruce D."/>
            <person name="Detter J.C."/>
            <person name="Han C."/>
            <person name="Kuske C."/>
            <person name="Schmutz J."/>
            <person name="Larimer F."/>
            <person name="Land M."/>
            <person name="Hauser L."/>
            <person name="Kyrpides N."/>
            <person name="Kim E.A."/>
            <person name="Richardson P."/>
        </authorList>
    </citation>
    <scope>NUCLEOTIDE SEQUENCE [LARGE SCALE GENOMIC DNA]</scope>
    <source>
        <strain>ATCC 700394 / DSM 18823 / ISDg</strain>
    </source>
</reference>
<accession>A9KLY2</accession>
<dbReference type="EMBL" id="CP000885">
    <property type="protein sequence ID" value="ABX44291.1"/>
    <property type="molecule type" value="Genomic_DNA"/>
</dbReference>
<dbReference type="RefSeq" id="WP_012201938.1">
    <property type="nucleotide sequence ID" value="NC_010001.1"/>
</dbReference>
<dbReference type="STRING" id="357809.Cphy_3944"/>
<dbReference type="KEGG" id="cpy:Cphy_3944"/>
<dbReference type="eggNOG" id="COG0759">
    <property type="taxonomic scope" value="Bacteria"/>
</dbReference>
<dbReference type="HOGENOM" id="CLU_144811_6_0_9"/>
<dbReference type="OrthoDB" id="9801753at2"/>
<dbReference type="Proteomes" id="UP000000370">
    <property type="component" value="Chromosome"/>
</dbReference>
<dbReference type="GO" id="GO:0005886">
    <property type="term" value="C:plasma membrane"/>
    <property type="evidence" value="ECO:0007669"/>
    <property type="project" value="UniProtKB-SubCell"/>
</dbReference>
<dbReference type="HAMAP" id="MF_00386">
    <property type="entry name" value="UPF0161_YidD"/>
    <property type="match status" value="1"/>
</dbReference>
<dbReference type="InterPro" id="IPR002696">
    <property type="entry name" value="Membr_insert_effic_factor_YidD"/>
</dbReference>
<dbReference type="NCBIfam" id="TIGR00278">
    <property type="entry name" value="membrane protein insertion efficiency factor YidD"/>
    <property type="match status" value="1"/>
</dbReference>
<dbReference type="PANTHER" id="PTHR33383">
    <property type="entry name" value="MEMBRANE PROTEIN INSERTION EFFICIENCY FACTOR-RELATED"/>
    <property type="match status" value="1"/>
</dbReference>
<dbReference type="PANTHER" id="PTHR33383:SF1">
    <property type="entry name" value="MEMBRANE PROTEIN INSERTION EFFICIENCY FACTOR-RELATED"/>
    <property type="match status" value="1"/>
</dbReference>
<dbReference type="Pfam" id="PF01809">
    <property type="entry name" value="YidD"/>
    <property type="match status" value="1"/>
</dbReference>
<dbReference type="SMART" id="SM01234">
    <property type="entry name" value="Haemolytic"/>
    <property type="match status" value="1"/>
</dbReference>
<protein>
    <recommendedName>
        <fullName evidence="1">Putative membrane protein insertion efficiency factor</fullName>
    </recommendedName>
</protein>
<feature type="chain" id="PRO_1000122631" description="Putative membrane protein insertion efficiency factor">
    <location>
        <begin position="1"/>
        <end position="70"/>
    </location>
</feature>